<gene>
    <name type="ordered locus">At4g11521</name>
    <name type="ORF">F25E4.140</name>
</gene>
<proteinExistence type="uncertain"/>
<evidence type="ECO:0000255" key="1"/>
<evidence type="ECO:0000255" key="2">
    <source>
        <dbReference type="PROSITE-ProRule" id="PRU00806"/>
    </source>
</evidence>
<evidence type="ECO:0000305" key="3"/>
<name>CRK_ARATH</name>
<reference key="1">
    <citation type="journal article" date="1999" name="Nature">
        <title>Sequence and analysis of chromosome 4 of the plant Arabidopsis thaliana.</title>
        <authorList>
            <person name="Mayer K.F.X."/>
            <person name="Schueller C."/>
            <person name="Wambutt R."/>
            <person name="Murphy G."/>
            <person name="Volckaert G."/>
            <person name="Pohl T."/>
            <person name="Duesterhoeft A."/>
            <person name="Stiekema W."/>
            <person name="Entian K.-D."/>
            <person name="Terryn N."/>
            <person name="Harris B."/>
            <person name="Ansorge W."/>
            <person name="Brandt P."/>
            <person name="Grivell L.A."/>
            <person name="Rieger M."/>
            <person name="Weichselgartner M."/>
            <person name="de Simone V."/>
            <person name="Obermaier B."/>
            <person name="Mache R."/>
            <person name="Mueller M."/>
            <person name="Kreis M."/>
            <person name="Delseny M."/>
            <person name="Puigdomenech P."/>
            <person name="Watson M."/>
            <person name="Schmidtheini T."/>
            <person name="Reichert B."/>
            <person name="Portetelle D."/>
            <person name="Perez-Alonso M."/>
            <person name="Boutry M."/>
            <person name="Bancroft I."/>
            <person name="Vos P."/>
            <person name="Hoheisel J."/>
            <person name="Zimmermann W."/>
            <person name="Wedler H."/>
            <person name="Ridley P."/>
            <person name="Langham S.-A."/>
            <person name="McCullagh B."/>
            <person name="Bilham L."/>
            <person name="Robben J."/>
            <person name="van der Schueren J."/>
            <person name="Grymonprez B."/>
            <person name="Chuang Y.-J."/>
            <person name="Vandenbussche F."/>
            <person name="Braeken M."/>
            <person name="Weltjens I."/>
            <person name="Voet M."/>
            <person name="Bastiaens I."/>
            <person name="Aert R."/>
            <person name="Defoor E."/>
            <person name="Weitzenegger T."/>
            <person name="Bothe G."/>
            <person name="Ramsperger U."/>
            <person name="Hilbert H."/>
            <person name="Braun M."/>
            <person name="Holzer E."/>
            <person name="Brandt A."/>
            <person name="Peters S."/>
            <person name="van Staveren M."/>
            <person name="Dirkse W."/>
            <person name="Mooijman P."/>
            <person name="Klein Lankhorst R."/>
            <person name="Rose M."/>
            <person name="Hauf J."/>
            <person name="Koetter P."/>
            <person name="Berneiser S."/>
            <person name="Hempel S."/>
            <person name="Feldpausch M."/>
            <person name="Lamberth S."/>
            <person name="Van den Daele H."/>
            <person name="De Keyser A."/>
            <person name="Buysshaert C."/>
            <person name="Gielen J."/>
            <person name="Villarroel R."/>
            <person name="De Clercq R."/>
            <person name="van Montagu M."/>
            <person name="Rogers J."/>
            <person name="Cronin A."/>
            <person name="Quail M.A."/>
            <person name="Bray-Allen S."/>
            <person name="Clark L."/>
            <person name="Doggett J."/>
            <person name="Hall S."/>
            <person name="Kay M."/>
            <person name="Lennard N."/>
            <person name="McLay K."/>
            <person name="Mayes R."/>
            <person name="Pettett A."/>
            <person name="Rajandream M.A."/>
            <person name="Lyne M."/>
            <person name="Benes V."/>
            <person name="Rechmann S."/>
            <person name="Borkova D."/>
            <person name="Bloecker H."/>
            <person name="Scharfe M."/>
            <person name="Grimm M."/>
            <person name="Loehnert T.-H."/>
            <person name="Dose S."/>
            <person name="de Haan M."/>
            <person name="Maarse A.C."/>
            <person name="Schaefer M."/>
            <person name="Mueller-Auer S."/>
            <person name="Gabel C."/>
            <person name="Fuchs M."/>
            <person name="Fartmann B."/>
            <person name="Granderath K."/>
            <person name="Dauner D."/>
            <person name="Herzl A."/>
            <person name="Neumann S."/>
            <person name="Argiriou A."/>
            <person name="Vitale D."/>
            <person name="Liguori R."/>
            <person name="Piravandi E."/>
            <person name="Massenet O."/>
            <person name="Quigley F."/>
            <person name="Clabauld G."/>
            <person name="Muendlein A."/>
            <person name="Felber R."/>
            <person name="Schnabl S."/>
            <person name="Hiller R."/>
            <person name="Schmidt W."/>
            <person name="Lecharny A."/>
            <person name="Aubourg S."/>
            <person name="Chefdor F."/>
            <person name="Cooke R."/>
            <person name="Berger C."/>
            <person name="Monfort A."/>
            <person name="Casacuberta E."/>
            <person name="Gibbons T."/>
            <person name="Weber N."/>
            <person name="Vandenbol M."/>
            <person name="Bargues M."/>
            <person name="Terol J."/>
            <person name="Torres A."/>
            <person name="Perez-Perez A."/>
            <person name="Purnelle B."/>
            <person name="Bent E."/>
            <person name="Johnson S."/>
            <person name="Tacon D."/>
            <person name="Jesse T."/>
            <person name="Heijnen L."/>
            <person name="Schwarz S."/>
            <person name="Scholler P."/>
            <person name="Heber S."/>
            <person name="Francs P."/>
            <person name="Bielke C."/>
            <person name="Frishman D."/>
            <person name="Haase D."/>
            <person name="Lemcke K."/>
            <person name="Mewes H.-W."/>
            <person name="Stocker S."/>
            <person name="Zaccaria P."/>
            <person name="Bevan M."/>
            <person name="Wilson R.K."/>
            <person name="de la Bastide M."/>
            <person name="Habermann K."/>
            <person name="Parnell L."/>
            <person name="Dedhia N."/>
            <person name="Gnoj L."/>
            <person name="Schutz K."/>
            <person name="Huang E."/>
            <person name="Spiegel L."/>
            <person name="Sekhon M."/>
            <person name="Murray J."/>
            <person name="Sheet P."/>
            <person name="Cordes M."/>
            <person name="Abu-Threideh J."/>
            <person name="Stoneking T."/>
            <person name="Kalicki J."/>
            <person name="Graves T."/>
            <person name="Harmon G."/>
            <person name="Edwards J."/>
            <person name="Latreille P."/>
            <person name="Courtney L."/>
            <person name="Cloud J."/>
            <person name="Abbott A."/>
            <person name="Scott K."/>
            <person name="Johnson D."/>
            <person name="Minx P."/>
            <person name="Bentley D."/>
            <person name="Fulton B."/>
            <person name="Miller N."/>
            <person name="Greco T."/>
            <person name="Kemp K."/>
            <person name="Kramer J."/>
            <person name="Fulton L."/>
            <person name="Mardis E."/>
            <person name="Dante M."/>
            <person name="Pepin K."/>
            <person name="Hillier L.W."/>
            <person name="Nelson J."/>
            <person name="Spieth J."/>
            <person name="Ryan E."/>
            <person name="Andrews S."/>
            <person name="Geisel C."/>
            <person name="Layman D."/>
            <person name="Du H."/>
            <person name="Ali J."/>
            <person name="Berghoff A."/>
            <person name="Jones K."/>
            <person name="Drone K."/>
            <person name="Cotton M."/>
            <person name="Joshu C."/>
            <person name="Antonoiu B."/>
            <person name="Zidanic M."/>
            <person name="Strong C."/>
            <person name="Sun H."/>
            <person name="Lamar B."/>
            <person name="Yordan C."/>
            <person name="Ma P."/>
            <person name="Zhong J."/>
            <person name="Preston R."/>
            <person name="Vil D."/>
            <person name="Shekher M."/>
            <person name="Matero A."/>
            <person name="Shah R."/>
            <person name="Swaby I.K."/>
            <person name="O'Shaughnessy A."/>
            <person name="Rodriguez M."/>
            <person name="Hoffman J."/>
            <person name="Till S."/>
            <person name="Granat S."/>
            <person name="Shohdy N."/>
            <person name="Hasegawa A."/>
            <person name="Hameed A."/>
            <person name="Lodhi M."/>
            <person name="Johnson A."/>
            <person name="Chen E."/>
            <person name="Marra M.A."/>
            <person name="Martienssen R."/>
            <person name="McCombie W.R."/>
        </authorList>
    </citation>
    <scope>NUCLEOTIDE SEQUENCE [LARGE SCALE GENOMIC DNA]</scope>
    <source>
        <strain>cv. Columbia</strain>
    </source>
</reference>
<reference key="2">
    <citation type="journal article" date="2017" name="Plant J.">
        <title>Araport11: a complete reannotation of the Arabidopsis thaliana reference genome.</title>
        <authorList>
            <person name="Cheng C.Y."/>
            <person name="Krishnakumar V."/>
            <person name="Chan A.P."/>
            <person name="Thibaud-Nissen F."/>
            <person name="Schobel S."/>
            <person name="Town C.D."/>
        </authorList>
    </citation>
    <scope>GENOME REANNOTATION</scope>
    <source>
        <strain>cv. Columbia</strain>
    </source>
</reference>
<reference key="3">
    <citation type="journal article" date="2003" name="Science">
        <title>Empirical analysis of transcriptional activity in the Arabidopsis genome.</title>
        <authorList>
            <person name="Yamada K."/>
            <person name="Lim J."/>
            <person name="Dale J.M."/>
            <person name="Chen H."/>
            <person name="Shinn P."/>
            <person name="Palm C.J."/>
            <person name="Southwick A.M."/>
            <person name="Wu H.C."/>
            <person name="Kim C.J."/>
            <person name="Nguyen M."/>
            <person name="Pham P.K."/>
            <person name="Cheuk R.F."/>
            <person name="Karlin-Newmann G."/>
            <person name="Liu S.X."/>
            <person name="Lam B."/>
            <person name="Sakano H."/>
            <person name="Wu T."/>
            <person name="Yu G."/>
            <person name="Miranda M."/>
            <person name="Quach H.L."/>
            <person name="Tripp M."/>
            <person name="Chang C.H."/>
            <person name="Lee J.M."/>
            <person name="Toriumi M.J."/>
            <person name="Chan M.M."/>
            <person name="Tang C.C."/>
            <person name="Onodera C.S."/>
            <person name="Deng J.M."/>
            <person name="Akiyama K."/>
            <person name="Ansari Y."/>
            <person name="Arakawa T."/>
            <person name="Banh J."/>
            <person name="Banno F."/>
            <person name="Bowser L."/>
            <person name="Brooks S.Y."/>
            <person name="Carninci P."/>
            <person name="Chao Q."/>
            <person name="Choy N."/>
            <person name="Enju A."/>
            <person name="Goldsmith A.D."/>
            <person name="Gurjal M."/>
            <person name="Hansen N.F."/>
            <person name="Hayashizaki Y."/>
            <person name="Johnson-Hopson C."/>
            <person name="Hsuan V.W."/>
            <person name="Iida K."/>
            <person name="Karnes M."/>
            <person name="Khan S."/>
            <person name="Koesema E."/>
            <person name="Ishida J."/>
            <person name="Jiang P.X."/>
            <person name="Jones T."/>
            <person name="Kawai J."/>
            <person name="Kamiya A."/>
            <person name="Meyers C."/>
            <person name="Nakajima M."/>
            <person name="Narusaka M."/>
            <person name="Seki M."/>
            <person name="Sakurai T."/>
            <person name="Satou M."/>
            <person name="Tamse R."/>
            <person name="Vaysberg M."/>
            <person name="Wallender E.K."/>
            <person name="Wong C."/>
            <person name="Yamamura Y."/>
            <person name="Yuan S."/>
            <person name="Shinozaki K."/>
            <person name="Davis R.W."/>
            <person name="Theologis A."/>
            <person name="Ecker J.R."/>
        </authorList>
    </citation>
    <scope>NUCLEOTIDE SEQUENCE [LARGE SCALE MRNA]</scope>
    <source>
        <strain>cv. Columbia</strain>
    </source>
</reference>
<reference key="4">
    <citation type="journal article" date="2001" name="Plant Physiol.">
        <title>A superfamily of proteins with novel cysteine-rich repeats.</title>
        <authorList>
            <person name="Chen Z."/>
        </authorList>
    </citation>
    <scope>GENE FAMILY ORGANIZATION</scope>
    <scope>NOMENCLATURE</scope>
</reference>
<sequence length="265" mass="29583">MMLNTLFLPIFLFFLITFDYVSTQTCFNGYFKPNGTYDLNRRRILSSLASKVTAHNGFYSSTIGQNPNQMFIISMCIPGTKPERCSDCIKGSTDGLLRSCPNQTVGYVWPDCCMVRYSNISFSGSLIMEPSQPVSDPAPIGVDLTLFDRIWDELMSRTITTASRTHGSLSFGHKYYAADVASLTTFQTIYTMVQCTPDVSSGDCEFCLKRTVLDYKKCCRGHIGGAFVRPFCFIRWDLYPFAGAFENITLPSPPPPLSLTPPVSN</sequence>
<comment type="subcellular location">
    <subcellularLocation>
        <location evidence="3">Secreted</location>
    </subcellularLocation>
</comment>
<comment type="similarity">
    <text evidence="3">Belongs to the protein kinase superfamily. Ser/Thr protein kinase family. CRK subfamily.</text>
</comment>
<comment type="caution">
    <text evidence="3">Lacks the transmembrane and the protein kinase domains, which are conserved features of the CRK subfamily.</text>
</comment>
<comment type="caution">
    <text evidence="3">Could be the product of a pseudogene.</text>
</comment>
<comment type="sequence caution" evidence="3">
    <conflict type="erroneous initiation">
        <sequence resource="EMBL-CDS" id="CAB78195"/>
    </conflict>
    <text>Truncated N-terminus.</text>
</comment>
<comment type="sequence caution" evidence="3">
    <conflict type="erroneous initiation">
        <sequence resource="EMBL-CDS" id="CAB82157"/>
    </conflict>
    <text>Truncated N-terminus.</text>
</comment>
<feature type="signal peptide" evidence="1">
    <location>
        <begin position="1"/>
        <end position="23"/>
    </location>
</feature>
<feature type="chain" id="PRO_0000295081" description="Putative cysteine-rich receptor-like protein kinase At4g11521">
    <location>
        <begin position="24"/>
        <end position="265"/>
    </location>
</feature>
<feature type="domain" description="Gnk2-homologous 1" evidence="2">
    <location>
        <begin position="24"/>
        <end position="122"/>
    </location>
</feature>
<feature type="domain" description="Gnk2-homologous 2" evidence="2">
    <location>
        <begin position="128"/>
        <end position="241"/>
    </location>
</feature>
<feature type="glycosylation site" description="N-linked (GlcNAc...) asparagine" evidence="1">
    <location>
        <position position="34"/>
    </location>
</feature>
<feature type="glycosylation site" description="N-linked (GlcNAc...) asparagine" evidence="1">
    <location>
        <position position="102"/>
    </location>
</feature>
<feature type="glycosylation site" description="N-linked (GlcNAc...) asparagine" evidence="1">
    <location>
        <position position="119"/>
    </location>
</feature>
<feature type="glycosylation site" description="N-linked (GlcNAc...) asparagine" evidence="1">
    <location>
        <position position="247"/>
    </location>
</feature>
<dbReference type="EMBL" id="AL050399">
    <property type="protein sequence ID" value="CAB82157.1"/>
    <property type="status" value="ALT_INIT"/>
    <property type="molecule type" value="Genomic_DNA"/>
</dbReference>
<dbReference type="EMBL" id="AL161532">
    <property type="protein sequence ID" value="CAB78195.1"/>
    <property type="status" value="ALT_INIT"/>
    <property type="molecule type" value="Genomic_DNA"/>
</dbReference>
<dbReference type="EMBL" id="CP002687">
    <property type="protein sequence ID" value="AEE83020.1"/>
    <property type="molecule type" value="Genomic_DNA"/>
</dbReference>
<dbReference type="EMBL" id="AY099757">
    <property type="protein sequence ID" value="AAM20608.1"/>
    <property type="molecule type" value="mRNA"/>
</dbReference>
<dbReference type="EMBL" id="BT000281">
    <property type="protein sequence ID" value="AAN15600.1"/>
    <property type="molecule type" value="mRNA"/>
</dbReference>
<dbReference type="PIR" id="T10572">
    <property type="entry name" value="T10572"/>
</dbReference>
<dbReference type="RefSeq" id="NP_001154221.1">
    <property type="nucleotide sequence ID" value="NM_001160749.2"/>
</dbReference>
<dbReference type="SMR" id="Q8LPI0"/>
<dbReference type="STRING" id="3702.Q8LPI0"/>
<dbReference type="GlyGen" id="Q8LPI0">
    <property type="glycosylation" value="4 sites"/>
</dbReference>
<dbReference type="iPTMnet" id="Q8LPI0"/>
<dbReference type="PaxDb" id="3702-AT4G11521.1"/>
<dbReference type="ProteomicsDB" id="220342"/>
<dbReference type="EnsemblPlants" id="AT4G11521.1">
    <property type="protein sequence ID" value="AT4G11521.1"/>
    <property type="gene ID" value="AT4G11521"/>
</dbReference>
<dbReference type="GeneID" id="7922527"/>
<dbReference type="Gramene" id="AT4G11521.1">
    <property type="protein sequence ID" value="AT4G11521.1"/>
    <property type="gene ID" value="AT4G11521"/>
</dbReference>
<dbReference type="KEGG" id="ath:AT4G11521"/>
<dbReference type="Araport" id="AT4G11521"/>
<dbReference type="TAIR" id="AT4G11521"/>
<dbReference type="eggNOG" id="ENOG502QWDY">
    <property type="taxonomic scope" value="Eukaryota"/>
</dbReference>
<dbReference type="HOGENOM" id="CLU_000288_35_0_1"/>
<dbReference type="InParanoid" id="Q8LPI0"/>
<dbReference type="OMA" id="IWDELMS"/>
<dbReference type="PhylomeDB" id="Q8LPI0"/>
<dbReference type="Proteomes" id="UP000006548">
    <property type="component" value="Chromosome 4"/>
</dbReference>
<dbReference type="ExpressionAtlas" id="Q8LPI0">
    <property type="expression patterns" value="baseline and differential"/>
</dbReference>
<dbReference type="GO" id="GO:0005576">
    <property type="term" value="C:extracellular region"/>
    <property type="evidence" value="ECO:0007669"/>
    <property type="project" value="UniProtKB-SubCell"/>
</dbReference>
<dbReference type="CDD" id="cd23509">
    <property type="entry name" value="Gnk2-like"/>
    <property type="match status" value="2"/>
</dbReference>
<dbReference type="FunFam" id="3.30.430.20:FF:000007">
    <property type="entry name" value="Cysteine-rich receptor-like protein kinase 11"/>
    <property type="match status" value="1"/>
</dbReference>
<dbReference type="FunFam" id="3.30.430.20:FF:000003">
    <property type="entry name" value="Cysteine-rich RLK (RECEPTOR-like protein kinase) 10"/>
    <property type="match status" value="1"/>
</dbReference>
<dbReference type="Gene3D" id="3.30.430.20">
    <property type="entry name" value="Gnk2 domain, C-X8-C-X2-C motif"/>
    <property type="match status" value="2"/>
</dbReference>
<dbReference type="InterPro" id="IPR002902">
    <property type="entry name" value="GNK2"/>
</dbReference>
<dbReference type="InterPro" id="IPR038408">
    <property type="entry name" value="GNK2_sf"/>
</dbReference>
<dbReference type="PANTHER" id="PTHR32099:SF92">
    <property type="entry name" value="CYSTEINE-RICH RECEPTOR-LIKE PROTEIN KINASE 11"/>
    <property type="match status" value="1"/>
</dbReference>
<dbReference type="PANTHER" id="PTHR32099">
    <property type="entry name" value="CYSTEINE-RICH REPEAT SECRETORY PROTEIN"/>
    <property type="match status" value="1"/>
</dbReference>
<dbReference type="Pfam" id="PF01657">
    <property type="entry name" value="Stress-antifung"/>
    <property type="match status" value="2"/>
</dbReference>
<dbReference type="PROSITE" id="PS51473">
    <property type="entry name" value="GNK2"/>
    <property type="match status" value="2"/>
</dbReference>
<organism>
    <name type="scientific">Arabidopsis thaliana</name>
    <name type="common">Mouse-ear cress</name>
    <dbReference type="NCBI Taxonomy" id="3702"/>
    <lineage>
        <taxon>Eukaryota</taxon>
        <taxon>Viridiplantae</taxon>
        <taxon>Streptophyta</taxon>
        <taxon>Embryophyta</taxon>
        <taxon>Tracheophyta</taxon>
        <taxon>Spermatophyta</taxon>
        <taxon>Magnoliopsida</taxon>
        <taxon>eudicotyledons</taxon>
        <taxon>Gunneridae</taxon>
        <taxon>Pentapetalae</taxon>
        <taxon>rosids</taxon>
        <taxon>malvids</taxon>
        <taxon>Brassicales</taxon>
        <taxon>Brassicaceae</taxon>
        <taxon>Camelineae</taxon>
        <taxon>Arabidopsis</taxon>
    </lineage>
</organism>
<protein>
    <recommendedName>
        <fullName evidence="3">Putative cysteine-rich receptor-like protein kinase At4g11521</fullName>
        <shortName evidence="3">Cysteine-rich RLK At4g11521</shortName>
    </recommendedName>
</protein>
<keyword id="KW-0325">Glycoprotein</keyword>
<keyword id="KW-0675">Receptor</keyword>
<keyword id="KW-1185">Reference proteome</keyword>
<keyword id="KW-0677">Repeat</keyword>
<keyword id="KW-0964">Secreted</keyword>
<keyword id="KW-0732">Signal</keyword>
<accession>Q8LPI0</accession>
<accession>Q9LDW7</accession>